<keyword id="KW-0966">Cell projection</keyword>
<keyword id="KW-0969">Cilium</keyword>
<keyword id="KW-0963">Cytoplasm</keyword>
<keyword id="KW-0206">Cytoskeleton</keyword>
<keyword id="KW-0282">Flagellum</keyword>
<keyword id="KW-0378">Hydrolase</keyword>
<keyword id="KW-0539">Nucleus</keyword>
<keyword id="KW-0645">Protease</keyword>
<keyword id="KW-1185">Reference proteome</keyword>
<keyword id="KW-0788">Thiol protease</keyword>
<keyword id="KW-0833">Ubl conjugation pathway</keyword>
<feature type="chain" id="PRO_0000080656" description="Ubiquitin carboxyl-terminal hydrolase 26">
    <location>
        <begin position="1"/>
        <end position="835"/>
    </location>
</feature>
<feature type="domain" description="USP">
    <location>
        <begin position="286"/>
        <end position="816"/>
    </location>
</feature>
<feature type="region of interest" description="Disordered" evidence="4">
    <location>
        <begin position="102"/>
        <end position="128"/>
    </location>
</feature>
<feature type="region of interest" description="Disordered" evidence="4">
    <location>
        <begin position="597"/>
        <end position="747"/>
    </location>
</feature>
<feature type="compositionally biased region" description="Polar residues" evidence="4">
    <location>
        <begin position="118"/>
        <end position="128"/>
    </location>
</feature>
<feature type="compositionally biased region" description="Basic and acidic residues" evidence="4">
    <location>
        <begin position="634"/>
        <end position="652"/>
    </location>
</feature>
<feature type="compositionally biased region" description="Basic and acidic residues" evidence="4">
    <location>
        <begin position="669"/>
        <end position="679"/>
    </location>
</feature>
<feature type="compositionally biased region" description="Polar residues" evidence="4">
    <location>
        <begin position="683"/>
        <end position="708"/>
    </location>
</feature>
<feature type="compositionally biased region" description="Low complexity" evidence="4">
    <location>
        <begin position="709"/>
        <end position="725"/>
    </location>
</feature>
<feature type="compositionally biased region" description="Basic and acidic residues" evidence="4">
    <location>
        <begin position="726"/>
        <end position="747"/>
    </location>
</feature>
<feature type="active site" description="Nucleophile" evidence="2 3">
    <location>
        <position position="295"/>
    </location>
</feature>
<feature type="active site" description="Proton acceptor" evidence="2 3">
    <location>
        <position position="771"/>
    </location>
</feature>
<feature type="sequence conflict" description="In Ref. 1; AAK31949." evidence="6" ref="1">
    <original>L</original>
    <variation>F</variation>
    <location>
        <position position="746"/>
    </location>
</feature>
<sequence length="835" mass="95452">MEPILINAQVQMWSAKAGMSKSRNALIETCVGKREVKLILYFSTGKIKTLQLHDNIKSVVLQTYGEDQNYLHLTFKNNDFLFVEKLTTTDARRLKRFLDKTSQGSIRPARSDERCGEPSTSAQELNGSGSSCETNSECFESPKESEMCMFRELSLLPSSSTFLHNVGLLENQFIKRKRFFSDLAKNEKQSNLKDSIRDFEANLVVCISNEKGKERNVREVDISKPGFGFPFETNYPEDSGVDVRDLNDLITKLFSPVLLETHCIENGLEWHEYMKTYLLYPEKLWQGLPNVGNTCYINVVLQSLCSIPLFINDLFNQGFPWIKAPKDDFNMLLMQLLVLKDIYNARFRQKLLIGITKALPIFGEIFAVDRQNDAHEFLSLCLVQLKETFQRVTMMWQSENDSGDFYLLKDIFADYATINKMPVCPVTNNFEFELLSSIFCKACGLTLFKGEPSRYLSINIPQGGKDMSIQSTLDLFFSAEELEHRCEKCLYNKSVSFHRFGRLPRVIIVHLKRYHFNESWVMKKDERPILVSKYLRLSCHCSKSTKPPPPLRPGEHVKNLDLLKPLEVLGSEILKLPFNSVRTSRSKGFETINITSNRESEAQSGKRVSEVLSGKVQQENSGKGDTAHIVGSELTKETEKLKKHEEEHRPSDLDSGSIREAQKYQQAEKCNEGRSDKQISLEALTQSRPKPISQEQTENLGKTTLSHTQDSSQSSQSSSDSSKSSRCSDDLDKKAKPTRKVDPTKLNKKEDNVYRLVNIINHIGNSPNGGHYINDAFDFKRQSWFTYSDLHVTRTQEDFVYRGRSSTGYVFFYMHNDIFEELLAKETQSTSTSKG</sequence>
<reference key="1">
    <citation type="journal article" date="2001" name="Nat. Genet.">
        <title>An abundance of X-linked genes expressed in spermatogonia.</title>
        <authorList>
            <person name="Wang P.J."/>
            <person name="McCarrey J.R."/>
            <person name="Yang F."/>
            <person name="Page D.C."/>
        </authorList>
    </citation>
    <scope>NUCLEOTIDE SEQUENCE [MRNA]</scope>
    <source>
        <tissue>Testis</tissue>
    </source>
</reference>
<reference key="2">
    <citation type="journal article" date="2009" name="PLoS Biol.">
        <title>Lineage-specific biology revealed by a finished genome assembly of the mouse.</title>
        <authorList>
            <person name="Church D.M."/>
            <person name="Goodstadt L."/>
            <person name="Hillier L.W."/>
            <person name="Zody M.C."/>
            <person name="Goldstein S."/>
            <person name="She X."/>
            <person name="Bult C.J."/>
            <person name="Agarwala R."/>
            <person name="Cherry J.L."/>
            <person name="DiCuccio M."/>
            <person name="Hlavina W."/>
            <person name="Kapustin Y."/>
            <person name="Meric P."/>
            <person name="Maglott D."/>
            <person name="Birtle Z."/>
            <person name="Marques A.C."/>
            <person name="Graves T."/>
            <person name="Zhou S."/>
            <person name="Teague B."/>
            <person name="Potamousis K."/>
            <person name="Churas C."/>
            <person name="Place M."/>
            <person name="Herschleb J."/>
            <person name="Runnheim R."/>
            <person name="Forrest D."/>
            <person name="Amos-Landgraf J."/>
            <person name="Schwartz D.C."/>
            <person name="Cheng Z."/>
            <person name="Lindblad-Toh K."/>
            <person name="Eichler E.E."/>
            <person name="Ponting C.P."/>
        </authorList>
    </citation>
    <scope>NUCLEOTIDE SEQUENCE [LARGE SCALE GENOMIC DNA]</scope>
    <source>
        <strain>C57BL/6J</strain>
    </source>
</reference>
<reference key="3">
    <citation type="journal article" date="2004" name="Genome Res.">
        <title>The status, quality, and expansion of the NIH full-length cDNA project: the Mammalian Gene Collection (MGC).</title>
        <authorList>
            <consortium name="The MGC Project Team"/>
        </authorList>
    </citation>
    <scope>NUCLEOTIDE SEQUENCE [LARGE SCALE MRNA]</scope>
    <source>
        <tissue>Brain</tissue>
    </source>
</reference>
<reference key="4">
    <citation type="journal article" date="2010" name="Cell">
        <title>A tissue-specific atlas of mouse protein phosphorylation and expression.</title>
        <authorList>
            <person name="Huttlin E.L."/>
            <person name="Jedrychowski M.P."/>
            <person name="Elias J.E."/>
            <person name="Goswami T."/>
            <person name="Rad R."/>
            <person name="Beausoleil S.A."/>
            <person name="Villen J."/>
            <person name="Haas W."/>
            <person name="Sowa M.E."/>
            <person name="Gygi S.P."/>
        </authorList>
    </citation>
    <scope>IDENTIFICATION BY MASS SPECTROMETRY [LARGE SCALE ANALYSIS]</scope>
    <source>
        <tissue>Testis</tissue>
    </source>
</reference>
<reference key="5">
    <citation type="journal article" date="2017" name="Nat. Commun.">
        <title>USP26 functions as a negative regulator of cellular reprogramming by stabilising PRC1 complex components.</title>
        <authorList>
            <person name="Ning B."/>
            <person name="Zhao W."/>
            <person name="Qian C."/>
            <person name="Liu P."/>
            <person name="Li Q."/>
            <person name="Li W."/>
            <person name="Wang R.F."/>
        </authorList>
    </citation>
    <scope>FUNCTION</scope>
</reference>
<organism>
    <name type="scientific">Mus musculus</name>
    <name type="common">Mouse</name>
    <dbReference type="NCBI Taxonomy" id="10090"/>
    <lineage>
        <taxon>Eukaryota</taxon>
        <taxon>Metazoa</taxon>
        <taxon>Chordata</taxon>
        <taxon>Craniata</taxon>
        <taxon>Vertebrata</taxon>
        <taxon>Euteleostomi</taxon>
        <taxon>Mammalia</taxon>
        <taxon>Eutheria</taxon>
        <taxon>Euarchontoglires</taxon>
        <taxon>Glires</taxon>
        <taxon>Rodentia</taxon>
        <taxon>Myomorpha</taxon>
        <taxon>Muroidea</taxon>
        <taxon>Muridae</taxon>
        <taxon>Murinae</taxon>
        <taxon>Mus</taxon>
        <taxon>Mus</taxon>
    </lineage>
</organism>
<comment type="function">
    <text evidence="1 5">Deubiquitinase regulating several biological processes through the deubiquitination of components of these processes (PubMed:28839133). Involved in somatic cell reprogramming through the 'Lys-48'-linked deubiquitination and stabilization of CBX4 and CBX6, two components of the polycomb-repressive complex 1 (PRC1) (By similarity). Also deubiquitinates and probably stabilizes the androgen receptor (AR), regulating the androgen receptor signaling pathway (By similarity). May play a role in spermatogenesis (By similarity).</text>
</comment>
<comment type="catalytic activity">
    <reaction evidence="1">
        <text>Thiol-dependent hydrolysis of ester, thioester, amide, peptide and isopeptide bonds formed by the C-terminal Gly of ubiquitin (a 76-residue protein attached to proteins as an intracellular targeting signal).</text>
        <dbReference type="EC" id="3.4.19.12"/>
    </reaction>
</comment>
<comment type="subunit">
    <text evidence="1">Interacts with RING1.</text>
</comment>
<comment type="subcellular location">
    <subcellularLocation>
        <location evidence="1">Nucleus</location>
    </subcellularLocation>
    <subcellularLocation>
        <location evidence="1">Cytoplasm</location>
        <location evidence="1">Cytoskeleton</location>
        <location evidence="1">Flagellum axoneme</location>
    </subcellularLocation>
</comment>
<comment type="similarity">
    <text evidence="6">Belongs to the peptidase C19 family.</text>
</comment>
<protein>
    <recommendedName>
        <fullName>Ubiquitin carboxyl-terminal hydrolase 26</fullName>
        <ecNumber evidence="1">3.4.19.12</ecNumber>
    </recommendedName>
    <alternativeName>
        <fullName>Deubiquitinating enzyme 26</fullName>
    </alternativeName>
    <alternativeName>
        <fullName>Ubiquitin thioesterase 26</fullName>
    </alternativeName>
    <alternativeName>
        <fullName>Ubiquitin-specific-processing protease 26</fullName>
    </alternativeName>
</protein>
<accession>Q99MX1</accession>
<accession>Q05A11</accession>
<name>UBP26_MOUSE</name>
<dbReference type="EC" id="3.4.19.12" evidence="1"/>
<dbReference type="EMBL" id="AF285570">
    <property type="protein sequence ID" value="AAK31949.1"/>
    <property type="molecule type" value="mRNA"/>
</dbReference>
<dbReference type="EMBL" id="AL662931">
    <property type="status" value="NOT_ANNOTATED_CDS"/>
    <property type="molecule type" value="Genomic_DNA"/>
</dbReference>
<dbReference type="EMBL" id="BC125454">
    <property type="protein sequence ID" value="AAI25455.1"/>
    <property type="molecule type" value="mRNA"/>
</dbReference>
<dbReference type="EMBL" id="BC132154">
    <property type="protein sequence ID" value="AAI32155.1"/>
    <property type="molecule type" value="mRNA"/>
</dbReference>
<dbReference type="CCDS" id="CCDS30122.1"/>
<dbReference type="RefSeq" id="NP_113565.2">
    <property type="nucleotide sequence ID" value="NM_031388.2"/>
</dbReference>
<dbReference type="RefSeq" id="XP_017174134.1">
    <property type="nucleotide sequence ID" value="XM_017318645.1"/>
</dbReference>
<dbReference type="SMR" id="Q99MX1"/>
<dbReference type="BioGRID" id="219948">
    <property type="interactions" value="5"/>
</dbReference>
<dbReference type="FunCoup" id="Q99MX1">
    <property type="interactions" value="78"/>
</dbReference>
<dbReference type="STRING" id="10090.ENSMUSP00000110519"/>
<dbReference type="MEROPS" id="C19.045"/>
<dbReference type="GlyGen" id="Q99MX1">
    <property type="glycosylation" value="3 sites, 2 N-linked glycans (2 sites), 1 O-linked glycan (1 site)"/>
</dbReference>
<dbReference type="iPTMnet" id="Q99MX1"/>
<dbReference type="PhosphoSitePlus" id="Q99MX1"/>
<dbReference type="SwissPalm" id="Q99MX1"/>
<dbReference type="PaxDb" id="10090-ENSMUSP00000110519"/>
<dbReference type="ProteomicsDB" id="298458"/>
<dbReference type="DNASU" id="83563"/>
<dbReference type="Ensembl" id="ENSMUST00000069509.4">
    <property type="protein sequence ID" value="ENSMUSP00000069140.4"/>
    <property type="gene ID" value="ENSMUSG00000055780.11"/>
</dbReference>
<dbReference type="Ensembl" id="ENSMUST00000114869.8">
    <property type="protein sequence ID" value="ENSMUSP00000110519.2"/>
    <property type="gene ID" value="ENSMUSG00000055780.11"/>
</dbReference>
<dbReference type="GeneID" id="83563"/>
<dbReference type="KEGG" id="mmu:83563"/>
<dbReference type="UCSC" id="uc009tec.1">
    <property type="organism name" value="mouse"/>
</dbReference>
<dbReference type="AGR" id="MGI:1933247"/>
<dbReference type="CTD" id="83844"/>
<dbReference type="MGI" id="MGI:1933247">
    <property type="gene designation" value="Usp26"/>
</dbReference>
<dbReference type="VEuPathDB" id="HostDB:ENSMUSG00000055780"/>
<dbReference type="eggNOG" id="KOG1868">
    <property type="taxonomic scope" value="Eukaryota"/>
</dbReference>
<dbReference type="GeneTree" id="ENSGT00940000161929"/>
<dbReference type="HOGENOM" id="CLU_012557_0_0_1"/>
<dbReference type="InParanoid" id="Q99MX1"/>
<dbReference type="OMA" id="NHLHLTF"/>
<dbReference type="OrthoDB" id="289038at2759"/>
<dbReference type="PhylomeDB" id="Q99MX1"/>
<dbReference type="TreeFam" id="TF323032"/>
<dbReference type="Reactome" id="R-MMU-5689880">
    <property type="pathway name" value="Ub-specific processing proteases"/>
</dbReference>
<dbReference type="BioGRID-ORCS" id="83563">
    <property type="hits" value="3 hits in 76 CRISPR screens"/>
</dbReference>
<dbReference type="PRO" id="PR:Q99MX1"/>
<dbReference type="Proteomes" id="UP000000589">
    <property type="component" value="Chromosome X"/>
</dbReference>
<dbReference type="RNAct" id="Q99MX1">
    <property type="molecule type" value="protein"/>
</dbReference>
<dbReference type="Bgee" id="ENSMUSG00000055780">
    <property type="expression patterns" value="Expressed in spermatid and 8 other cell types or tissues"/>
</dbReference>
<dbReference type="GO" id="GO:0005737">
    <property type="term" value="C:cytoplasm"/>
    <property type="evidence" value="ECO:0007669"/>
    <property type="project" value="UniProtKB-KW"/>
</dbReference>
<dbReference type="GO" id="GO:0005856">
    <property type="term" value="C:cytoskeleton"/>
    <property type="evidence" value="ECO:0007669"/>
    <property type="project" value="UniProtKB-KW"/>
</dbReference>
<dbReference type="GO" id="GO:0031514">
    <property type="term" value="C:motile cilium"/>
    <property type="evidence" value="ECO:0007669"/>
    <property type="project" value="UniProtKB-KW"/>
</dbReference>
<dbReference type="GO" id="GO:0005634">
    <property type="term" value="C:nucleus"/>
    <property type="evidence" value="ECO:0000250"/>
    <property type="project" value="UniProtKB"/>
</dbReference>
<dbReference type="GO" id="GO:0004843">
    <property type="term" value="F:cysteine-type deubiquitinase activity"/>
    <property type="evidence" value="ECO:0007669"/>
    <property type="project" value="UniProtKB-EC"/>
</dbReference>
<dbReference type="GO" id="GO:1990380">
    <property type="term" value="F:K48-linked deubiquitinase activity"/>
    <property type="evidence" value="ECO:0000250"/>
    <property type="project" value="UniProtKB"/>
</dbReference>
<dbReference type="GO" id="GO:0032435">
    <property type="term" value="P:negative regulation of proteasomal ubiquitin-dependent protein catabolic process"/>
    <property type="evidence" value="ECO:0000315"/>
    <property type="project" value="UniProtKB"/>
</dbReference>
<dbReference type="GO" id="GO:0016579">
    <property type="term" value="P:protein deubiquitination"/>
    <property type="evidence" value="ECO:0007669"/>
    <property type="project" value="InterPro"/>
</dbReference>
<dbReference type="GO" id="GO:0006508">
    <property type="term" value="P:proteolysis"/>
    <property type="evidence" value="ECO:0007669"/>
    <property type="project" value="UniProtKB-KW"/>
</dbReference>
<dbReference type="GO" id="GO:0060765">
    <property type="term" value="P:regulation of androgen receptor signaling pathway"/>
    <property type="evidence" value="ECO:0000250"/>
    <property type="project" value="UniProtKB"/>
</dbReference>
<dbReference type="GO" id="GO:0007283">
    <property type="term" value="P:spermatogenesis"/>
    <property type="evidence" value="ECO:0000250"/>
    <property type="project" value="UniProtKB"/>
</dbReference>
<dbReference type="CDD" id="cd02257">
    <property type="entry name" value="Peptidase_C19"/>
    <property type="match status" value="2"/>
</dbReference>
<dbReference type="CDD" id="cd13312">
    <property type="entry name" value="PH_USP37_like"/>
    <property type="match status" value="1"/>
</dbReference>
<dbReference type="FunFam" id="2.30.29.180:FF:000001">
    <property type="entry name" value="Ubiquitin carboxyl-terminal hydrolase 37"/>
    <property type="match status" value="1"/>
</dbReference>
<dbReference type="Gene3D" id="3.90.70.10">
    <property type="entry name" value="Cysteine proteinases"/>
    <property type="match status" value="1"/>
</dbReference>
<dbReference type="Gene3D" id="2.30.29.180">
    <property type="entry name" value="Ubiquitin carboxyl-terminal hydrolase 26/29/37, pleckstrin homology-like domain"/>
    <property type="match status" value="1"/>
</dbReference>
<dbReference type="InterPro" id="IPR038765">
    <property type="entry name" value="Papain-like_cys_pep_sf"/>
</dbReference>
<dbReference type="InterPro" id="IPR050164">
    <property type="entry name" value="Peptidase_C19"/>
</dbReference>
<dbReference type="InterPro" id="IPR001394">
    <property type="entry name" value="Peptidase_C19_UCH"/>
</dbReference>
<dbReference type="InterPro" id="IPR032069">
    <property type="entry name" value="USP37-like_PH"/>
</dbReference>
<dbReference type="InterPro" id="IPR038093">
    <property type="entry name" value="USP37-like_PH_sf"/>
</dbReference>
<dbReference type="InterPro" id="IPR018200">
    <property type="entry name" value="USP_CS"/>
</dbReference>
<dbReference type="InterPro" id="IPR028889">
    <property type="entry name" value="USP_dom"/>
</dbReference>
<dbReference type="PANTHER" id="PTHR24006">
    <property type="entry name" value="UBIQUITIN CARBOXYL-TERMINAL HYDROLASE"/>
    <property type="match status" value="1"/>
</dbReference>
<dbReference type="PANTHER" id="PTHR24006:SF918">
    <property type="entry name" value="UBIQUITIN CARBOXYL-TERMINAL HYDROLASE 26"/>
    <property type="match status" value="1"/>
</dbReference>
<dbReference type="Pfam" id="PF00443">
    <property type="entry name" value="UCH"/>
    <property type="match status" value="1"/>
</dbReference>
<dbReference type="Pfam" id="PF16674">
    <property type="entry name" value="UCH_N"/>
    <property type="match status" value="1"/>
</dbReference>
<dbReference type="SUPFAM" id="SSF54001">
    <property type="entry name" value="Cysteine proteinases"/>
    <property type="match status" value="1"/>
</dbReference>
<dbReference type="PROSITE" id="PS00972">
    <property type="entry name" value="USP_1"/>
    <property type="match status" value="1"/>
</dbReference>
<dbReference type="PROSITE" id="PS00973">
    <property type="entry name" value="USP_2"/>
    <property type="match status" value="1"/>
</dbReference>
<dbReference type="PROSITE" id="PS50235">
    <property type="entry name" value="USP_3"/>
    <property type="match status" value="1"/>
</dbReference>
<proteinExistence type="evidence at protein level"/>
<evidence type="ECO:0000250" key="1">
    <source>
        <dbReference type="UniProtKB" id="Q9BXU7"/>
    </source>
</evidence>
<evidence type="ECO:0000255" key="2">
    <source>
        <dbReference type="PROSITE-ProRule" id="PRU10092"/>
    </source>
</evidence>
<evidence type="ECO:0000255" key="3">
    <source>
        <dbReference type="PROSITE-ProRule" id="PRU10093"/>
    </source>
</evidence>
<evidence type="ECO:0000256" key="4">
    <source>
        <dbReference type="SAM" id="MobiDB-lite"/>
    </source>
</evidence>
<evidence type="ECO:0000269" key="5">
    <source>
    </source>
</evidence>
<evidence type="ECO:0000305" key="6"/>
<evidence type="ECO:0000312" key="7">
    <source>
        <dbReference type="MGI" id="MGI:1933247"/>
    </source>
</evidence>
<gene>
    <name evidence="7" type="primary">Usp26</name>
</gene>